<feature type="chain" id="PRO_0000129450" description="Large ribosomal subunit protein uL23c">
    <location>
        <begin position="1"/>
        <end position="95"/>
    </location>
</feature>
<comment type="function">
    <text evidence="1">Binds to 23S rRNA.</text>
</comment>
<comment type="subunit">
    <text evidence="1">Part of the 50S ribosomal subunit.</text>
</comment>
<comment type="subcellular location">
    <subcellularLocation>
        <location>Plastid</location>
        <location>Chloroplast</location>
    </subcellularLocation>
</comment>
<comment type="similarity">
    <text evidence="2">Belongs to the universal ribosomal protein uL23 family.</text>
</comment>
<protein>
    <recommendedName>
        <fullName evidence="2">Large ribosomal subunit protein uL23c</fullName>
    </recommendedName>
    <alternativeName>
        <fullName>50S ribosomal protein L23, chloroplastic</fullName>
    </alternativeName>
</protein>
<gene>
    <name type="primary">rpl23</name>
</gene>
<accession>O46896</accession>
<keyword id="KW-0150">Chloroplast</keyword>
<keyword id="KW-0934">Plastid</keyword>
<keyword id="KW-0687">Ribonucleoprotein</keyword>
<keyword id="KW-0689">Ribosomal protein</keyword>
<keyword id="KW-0694">RNA-binding</keyword>
<keyword id="KW-0699">rRNA-binding</keyword>
<organism>
    <name type="scientific">Guillardia theta</name>
    <name type="common">Cryptophyte</name>
    <name type="synonym">Cryptomonas phi</name>
    <dbReference type="NCBI Taxonomy" id="55529"/>
    <lineage>
        <taxon>Eukaryota</taxon>
        <taxon>Cryptophyceae</taxon>
        <taxon>Pyrenomonadales</taxon>
        <taxon>Geminigeraceae</taxon>
        <taxon>Guillardia</taxon>
    </lineage>
</organism>
<reference key="1">
    <citation type="journal article" date="1997" name="Biochem. Mol. Biol. Int.">
        <title>The large ribosomal protein gene cluster of a cryptomonad plastid: gene organization, sequence and evolutionary implications.</title>
        <authorList>
            <person name="Wang S.L."/>
            <person name="Liu X.-Q."/>
            <person name="Douglas S.E."/>
        </authorList>
    </citation>
    <scope>NUCLEOTIDE SEQUENCE [GENOMIC DNA]</scope>
</reference>
<reference key="2">
    <citation type="journal article" date="1999" name="J. Mol. Evol.">
        <title>The plastid genome of the cryptophyte alga, Guillardia theta: complete sequence and conserved synteny groups confirm its common ancestry with red algae.</title>
        <authorList>
            <person name="Douglas S.E."/>
            <person name="Penny S.L."/>
        </authorList>
    </citation>
    <scope>NUCLEOTIDE SEQUENCE [LARGE SCALE GENOMIC DNA]</scope>
</reference>
<dbReference type="EMBL" id="AF041468">
    <property type="protein sequence ID" value="AAC35705.1"/>
    <property type="molecule type" value="Genomic_DNA"/>
</dbReference>
<dbReference type="RefSeq" id="NP_050771.1">
    <property type="nucleotide sequence ID" value="NC_000926.1"/>
</dbReference>
<dbReference type="SMR" id="O46896"/>
<dbReference type="GeneID" id="857079"/>
<dbReference type="HOGENOM" id="CLU_037562_3_2_1"/>
<dbReference type="OMA" id="DHRAAKP"/>
<dbReference type="GO" id="GO:0009507">
    <property type="term" value="C:chloroplast"/>
    <property type="evidence" value="ECO:0007669"/>
    <property type="project" value="UniProtKB-SubCell"/>
</dbReference>
<dbReference type="GO" id="GO:1990904">
    <property type="term" value="C:ribonucleoprotein complex"/>
    <property type="evidence" value="ECO:0007669"/>
    <property type="project" value="UniProtKB-KW"/>
</dbReference>
<dbReference type="GO" id="GO:0005840">
    <property type="term" value="C:ribosome"/>
    <property type="evidence" value="ECO:0007669"/>
    <property type="project" value="UniProtKB-KW"/>
</dbReference>
<dbReference type="GO" id="GO:0019843">
    <property type="term" value="F:rRNA binding"/>
    <property type="evidence" value="ECO:0007669"/>
    <property type="project" value="UniProtKB-UniRule"/>
</dbReference>
<dbReference type="GO" id="GO:0003735">
    <property type="term" value="F:structural constituent of ribosome"/>
    <property type="evidence" value="ECO:0007669"/>
    <property type="project" value="InterPro"/>
</dbReference>
<dbReference type="GO" id="GO:0006412">
    <property type="term" value="P:translation"/>
    <property type="evidence" value="ECO:0007669"/>
    <property type="project" value="UniProtKB-UniRule"/>
</dbReference>
<dbReference type="Gene3D" id="3.30.70.330">
    <property type="match status" value="1"/>
</dbReference>
<dbReference type="HAMAP" id="MF_01369_B">
    <property type="entry name" value="Ribosomal_uL23_B"/>
    <property type="match status" value="1"/>
</dbReference>
<dbReference type="InterPro" id="IPR012677">
    <property type="entry name" value="Nucleotide-bd_a/b_plait_sf"/>
</dbReference>
<dbReference type="InterPro" id="IPR013025">
    <property type="entry name" value="Ribosomal_uL23-like"/>
</dbReference>
<dbReference type="InterPro" id="IPR012678">
    <property type="entry name" value="Ribosomal_uL23/eL15/eS24_sf"/>
</dbReference>
<dbReference type="InterPro" id="IPR001014">
    <property type="entry name" value="Ribosomal_uL23_CS"/>
</dbReference>
<dbReference type="NCBIfam" id="NF004363">
    <property type="entry name" value="PRK05738.2-4"/>
    <property type="match status" value="1"/>
</dbReference>
<dbReference type="NCBIfam" id="NF004368">
    <property type="entry name" value="PRK05738.3-4"/>
    <property type="match status" value="1"/>
</dbReference>
<dbReference type="PANTHER" id="PTHR11620">
    <property type="entry name" value="60S RIBOSOMAL PROTEIN L23A"/>
    <property type="match status" value="1"/>
</dbReference>
<dbReference type="Pfam" id="PF00276">
    <property type="entry name" value="Ribosomal_L23"/>
    <property type="match status" value="1"/>
</dbReference>
<dbReference type="SUPFAM" id="SSF54189">
    <property type="entry name" value="Ribosomal proteins S24e, L23 and L15e"/>
    <property type="match status" value="1"/>
</dbReference>
<dbReference type="PROSITE" id="PS00050">
    <property type="entry name" value="RIBOSOMAL_L23"/>
    <property type="match status" value="1"/>
</dbReference>
<geneLocation type="chloroplast"/>
<proteinExistence type="inferred from homology"/>
<evidence type="ECO:0000250" key="1"/>
<evidence type="ECO:0000305" key="2"/>
<sequence length="95" mass="10926">MHALIDLVKYPLITDKATRLLELNQYTFLTSRVATKTDIKNAIEFLFNVKVISINTCLLPLKRKRLGKFVGSKPRYKKAVVTLEKNNTINLFSEN</sequence>
<name>RK23_GUITH</name>